<gene>
    <name evidence="1" type="primary">rpo11</name>
    <name evidence="1" type="synonym">rpoL</name>
    <name type="ordered locus">NP_4162A</name>
</gene>
<protein>
    <recommendedName>
        <fullName evidence="1">DNA-directed RNA polymerase subunit Rpo11</fullName>
        <ecNumber evidence="1">2.7.7.6</ecNumber>
    </recommendedName>
    <alternativeName>
        <fullName evidence="1">DNA-directed RNA polymerase subunit L</fullName>
    </alternativeName>
</protein>
<comment type="function">
    <text evidence="1">DNA-dependent RNA polymerase (RNAP) catalyzes the transcription of DNA into RNA using the four ribonucleoside triphosphates as substrates.</text>
</comment>
<comment type="catalytic activity">
    <reaction evidence="1">
        <text>RNA(n) + a ribonucleoside 5'-triphosphate = RNA(n+1) + diphosphate</text>
        <dbReference type="Rhea" id="RHEA:21248"/>
        <dbReference type="Rhea" id="RHEA-COMP:14527"/>
        <dbReference type="Rhea" id="RHEA-COMP:17342"/>
        <dbReference type="ChEBI" id="CHEBI:33019"/>
        <dbReference type="ChEBI" id="CHEBI:61557"/>
        <dbReference type="ChEBI" id="CHEBI:140395"/>
        <dbReference type="EC" id="2.7.7.6"/>
    </reaction>
</comment>
<comment type="subunit">
    <text evidence="1">Part of the RNA polymerase complex.</text>
</comment>
<comment type="subcellular location">
    <subcellularLocation>
        <location evidence="1">Cytoplasm</location>
    </subcellularLocation>
</comment>
<comment type="similarity">
    <text evidence="1">Belongs to the archaeal Rpo11/eukaryotic RPB11/RPC19 RNA polymerase subunit family.</text>
</comment>
<feature type="chain" id="PRO_0000232469" description="DNA-directed RNA polymerase subunit Rpo11">
    <location>
        <begin position="1"/>
        <end position="94"/>
    </location>
</feature>
<reference key="1">
    <citation type="journal article" date="2005" name="Genome Res.">
        <title>Living with two extremes: conclusions from the genome sequence of Natronomonas pharaonis.</title>
        <authorList>
            <person name="Falb M."/>
            <person name="Pfeiffer F."/>
            <person name="Palm P."/>
            <person name="Rodewald K."/>
            <person name="Hickmann V."/>
            <person name="Tittor J."/>
            <person name="Oesterhelt D."/>
        </authorList>
    </citation>
    <scope>NUCLEOTIDE SEQUENCE [LARGE SCALE GENOMIC DNA]</scope>
    <source>
        <strain>ATCC 35678 / DSM 2160 / CIP 103997 / JCM 8858 / NBRC 14720 / NCIMB 2260 / Gabara</strain>
    </source>
</reference>
<keyword id="KW-0963">Cytoplasm</keyword>
<keyword id="KW-0240">DNA-directed RNA polymerase</keyword>
<keyword id="KW-0548">Nucleotidyltransferase</keyword>
<keyword id="KW-1185">Reference proteome</keyword>
<keyword id="KW-0804">Transcription</keyword>
<keyword id="KW-0808">Transferase</keyword>
<name>RPO11_NATPD</name>
<accession>Q3INY0</accession>
<organism>
    <name type="scientific">Natronomonas pharaonis (strain ATCC 35678 / DSM 2160 / CIP 103997 / JCM 8858 / NBRC 14720 / NCIMB 2260 / Gabara)</name>
    <name type="common">Halobacterium pharaonis</name>
    <dbReference type="NCBI Taxonomy" id="348780"/>
    <lineage>
        <taxon>Archaea</taxon>
        <taxon>Methanobacteriati</taxon>
        <taxon>Methanobacteriota</taxon>
        <taxon>Stenosarchaea group</taxon>
        <taxon>Halobacteria</taxon>
        <taxon>Halobacteriales</taxon>
        <taxon>Haloarculaceae</taxon>
        <taxon>Natronomonas</taxon>
    </lineage>
</organism>
<dbReference type="EC" id="2.7.7.6" evidence="1"/>
<dbReference type="EMBL" id="CR936257">
    <property type="protein sequence ID" value="CAI50172.1"/>
    <property type="molecule type" value="Genomic_DNA"/>
</dbReference>
<dbReference type="RefSeq" id="WP_011323788.1">
    <property type="nucleotide sequence ID" value="NC_007426.1"/>
</dbReference>
<dbReference type="SMR" id="Q3INY0"/>
<dbReference type="STRING" id="348780.NP_4162A"/>
<dbReference type="EnsemblBacteria" id="CAI50172">
    <property type="protein sequence ID" value="CAI50172"/>
    <property type="gene ID" value="NP_4162A"/>
</dbReference>
<dbReference type="GeneID" id="3703160"/>
<dbReference type="KEGG" id="nph:NP_4162A"/>
<dbReference type="eggNOG" id="arCOG04111">
    <property type="taxonomic scope" value="Archaea"/>
</dbReference>
<dbReference type="HOGENOM" id="CLU_090381_5_0_2"/>
<dbReference type="OrthoDB" id="24205at2157"/>
<dbReference type="Proteomes" id="UP000002698">
    <property type="component" value="Chromosome"/>
</dbReference>
<dbReference type="GO" id="GO:0005737">
    <property type="term" value="C:cytoplasm"/>
    <property type="evidence" value="ECO:0007669"/>
    <property type="project" value="UniProtKB-SubCell"/>
</dbReference>
<dbReference type="GO" id="GO:0000428">
    <property type="term" value="C:DNA-directed RNA polymerase complex"/>
    <property type="evidence" value="ECO:0007669"/>
    <property type="project" value="UniProtKB-KW"/>
</dbReference>
<dbReference type="GO" id="GO:0003677">
    <property type="term" value="F:DNA binding"/>
    <property type="evidence" value="ECO:0007669"/>
    <property type="project" value="InterPro"/>
</dbReference>
<dbReference type="GO" id="GO:0003899">
    <property type="term" value="F:DNA-directed RNA polymerase activity"/>
    <property type="evidence" value="ECO:0007669"/>
    <property type="project" value="UniProtKB-UniRule"/>
</dbReference>
<dbReference type="GO" id="GO:0046983">
    <property type="term" value="F:protein dimerization activity"/>
    <property type="evidence" value="ECO:0007669"/>
    <property type="project" value="InterPro"/>
</dbReference>
<dbReference type="GO" id="GO:0006351">
    <property type="term" value="P:DNA-templated transcription"/>
    <property type="evidence" value="ECO:0007669"/>
    <property type="project" value="UniProtKB-UniRule"/>
</dbReference>
<dbReference type="CDD" id="cd06927">
    <property type="entry name" value="RNAP_L"/>
    <property type="match status" value="1"/>
</dbReference>
<dbReference type="Gene3D" id="3.30.1360.10">
    <property type="entry name" value="RNA polymerase, RBP11-like subunit"/>
    <property type="match status" value="1"/>
</dbReference>
<dbReference type="HAMAP" id="MF_00261">
    <property type="entry name" value="RNApol_arch_Rpo11"/>
    <property type="match status" value="1"/>
</dbReference>
<dbReference type="InterPro" id="IPR036603">
    <property type="entry name" value="RBP11-like"/>
</dbReference>
<dbReference type="InterPro" id="IPR009025">
    <property type="entry name" value="RBP11-like_dimer"/>
</dbReference>
<dbReference type="InterPro" id="IPR008193">
    <property type="entry name" value="RNA_pol_Rpb11_13-16kDa_CS"/>
</dbReference>
<dbReference type="InterPro" id="IPR022905">
    <property type="entry name" value="Rpo11-like"/>
</dbReference>
<dbReference type="NCBIfam" id="NF002236">
    <property type="entry name" value="PRK01146.1-5"/>
    <property type="match status" value="1"/>
</dbReference>
<dbReference type="Pfam" id="PF13656">
    <property type="entry name" value="RNA_pol_L_2"/>
    <property type="match status" value="1"/>
</dbReference>
<dbReference type="SUPFAM" id="SSF55257">
    <property type="entry name" value="RBP11-like subunits of RNA polymerase"/>
    <property type="match status" value="1"/>
</dbReference>
<dbReference type="PROSITE" id="PS01154">
    <property type="entry name" value="RNA_POL_L_13KD"/>
    <property type="match status" value="1"/>
</dbReference>
<sequence length="94" mass="10151">MDLRVIENLETELAIEIEGEDHTFMNVLKGALLELDGVTAATYDVNPEQSGGQTEPIVTIKTDGSIDPLDALEQGASRVRDKTDAFEEAFEAAA</sequence>
<proteinExistence type="inferred from homology"/>
<evidence type="ECO:0000255" key="1">
    <source>
        <dbReference type="HAMAP-Rule" id="MF_00261"/>
    </source>
</evidence>